<name>GCH1L_HALSA</name>
<gene>
    <name type="ordered locus">VNG_1766C</name>
</gene>
<comment type="subunit">
    <text evidence="2">Homohexamer.</text>
</comment>
<comment type="similarity">
    <text evidence="3">Belongs to the GTP cyclohydrolase I type 2/NIF3 family.</text>
</comment>
<organism>
    <name type="scientific">Halobacterium salinarum (strain ATCC 700922 / JCM 11081 / NRC-1)</name>
    <name type="common">Halobacterium halobium</name>
    <dbReference type="NCBI Taxonomy" id="64091"/>
    <lineage>
        <taxon>Archaea</taxon>
        <taxon>Methanobacteriati</taxon>
        <taxon>Methanobacteriota</taxon>
        <taxon>Stenosarchaea group</taxon>
        <taxon>Halobacteria</taxon>
        <taxon>Halobacteriales</taxon>
        <taxon>Halobacteriaceae</taxon>
        <taxon>Halobacterium</taxon>
        <taxon>Halobacterium salinarum NRC-34001</taxon>
    </lineage>
</organism>
<reference key="1">
    <citation type="journal article" date="2000" name="Proc. Natl. Acad. Sci. U.S.A.">
        <title>Genome sequence of Halobacterium species NRC-1.</title>
        <authorList>
            <person name="Ng W.V."/>
            <person name="Kennedy S.P."/>
            <person name="Mahairas G.G."/>
            <person name="Berquist B."/>
            <person name="Pan M."/>
            <person name="Shukla H.D."/>
            <person name="Lasky S.R."/>
            <person name="Baliga N.S."/>
            <person name="Thorsson V."/>
            <person name="Sbrogna J."/>
            <person name="Swartzell S."/>
            <person name="Weir D."/>
            <person name="Hall J."/>
            <person name="Dahl T.A."/>
            <person name="Welti R."/>
            <person name="Goo Y.A."/>
            <person name="Leithauser B."/>
            <person name="Keller K."/>
            <person name="Cruz R."/>
            <person name="Danson M.J."/>
            <person name="Hough D.W."/>
            <person name="Maddocks D.G."/>
            <person name="Jablonski P.E."/>
            <person name="Krebs M.P."/>
            <person name="Angevine C.M."/>
            <person name="Dale H."/>
            <person name="Isenbarger T.A."/>
            <person name="Peck R.F."/>
            <person name="Pohlschroder M."/>
            <person name="Spudich J.L."/>
            <person name="Jung K.-H."/>
            <person name="Alam M."/>
            <person name="Freitas T."/>
            <person name="Hou S."/>
            <person name="Daniels C.J."/>
            <person name="Dennis P.P."/>
            <person name="Omer A.D."/>
            <person name="Ebhardt H."/>
            <person name="Lowe T.M."/>
            <person name="Liang P."/>
            <person name="Riley M."/>
            <person name="Hood L."/>
            <person name="DasSarma S."/>
        </authorList>
    </citation>
    <scope>NUCLEOTIDE SEQUENCE [LARGE SCALE GENOMIC DNA]</scope>
    <source>
        <strain>ATCC 700922 / JCM 11081 / NRC-1</strain>
    </source>
</reference>
<keyword id="KW-0479">Metal-binding</keyword>
<keyword id="KW-1185">Reference proteome</keyword>
<evidence type="ECO:0000250" key="1">
    <source>
        <dbReference type="UniProtKB" id="P0AFP6"/>
    </source>
</evidence>
<evidence type="ECO:0000250" key="2">
    <source>
        <dbReference type="UniProtKB" id="Q58337"/>
    </source>
</evidence>
<evidence type="ECO:0000305" key="3"/>
<accession>Q9HP80</accession>
<proteinExistence type="inferred from homology"/>
<feature type="chain" id="PRO_0000147347" description="GTP cyclohydrolase 1 type 2 homolog">
    <location>
        <begin position="1"/>
        <end position="253"/>
    </location>
</feature>
<feature type="binding site" evidence="1">
    <location>
        <position position="64"/>
    </location>
    <ligand>
        <name>a divalent metal cation</name>
        <dbReference type="ChEBI" id="CHEBI:60240"/>
        <label>1</label>
    </ligand>
</feature>
<feature type="binding site" evidence="1">
    <location>
        <position position="65"/>
    </location>
    <ligand>
        <name>a divalent metal cation</name>
        <dbReference type="ChEBI" id="CHEBI:60240"/>
        <label>2</label>
    </ligand>
</feature>
<feature type="binding site" evidence="1">
    <location>
        <position position="101"/>
    </location>
    <ligand>
        <name>a divalent metal cation</name>
        <dbReference type="ChEBI" id="CHEBI:60240"/>
        <label>1</label>
    </ligand>
</feature>
<feature type="binding site" evidence="1">
    <location>
        <position position="222"/>
    </location>
    <ligand>
        <name>a divalent metal cation</name>
        <dbReference type="ChEBI" id="CHEBI:60240"/>
        <label>2</label>
    </ligand>
</feature>
<feature type="binding site" evidence="1">
    <location>
        <position position="226"/>
    </location>
    <ligand>
        <name>a divalent metal cation</name>
        <dbReference type="ChEBI" id="CHEBI:60240"/>
        <label>1</label>
    </ligand>
</feature>
<feature type="binding site" evidence="1">
    <location>
        <position position="226"/>
    </location>
    <ligand>
        <name>a divalent metal cation</name>
        <dbReference type="ChEBI" id="CHEBI:60240"/>
        <label>2</label>
    </ligand>
</feature>
<sequence>MDVSDVTSRYNDRLRVTDYADAATNGLQVGPGDRSVERIAFAVDAAAATISDAVEWGADLLVVHHGVAWGGLDAVTGREYDRIAALVDGECALYAAHLPLDGHPELGNAAHVADVLGLTQRSPFGDHSGEQIGLQGQLPDPTSAPALSKSLAAALPTGDQPVQVLDVGPAELTDVAVVTGSGADWLREAEANGVDALVTGEGKGKLYHEAREAGVSVFLAGHYATETGGVRALEAVADDWGVETRFISHPTGL</sequence>
<dbReference type="EMBL" id="AE004437">
    <property type="protein sequence ID" value="AAG19990.1"/>
    <property type="molecule type" value="Genomic_DNA"/>
</dbReference>
<dbReference type="PIR" id="B84328">
    <property type="entry name" value="B84328"/>
</dbReference>
<dbReference type="RefSeq" id="WP_010903288.1">
    <property type="nucleotide sequence ID" value="NC_002607.1"/>
</dbReference>
<dbReference type="SMR" id="Q9HP80"/>
<dbReference type="STRING" id="64091.VNG_1766C"/>
<dbReference type="PaxDb" id="64091-VNG_1766C"/>
<dbReference type="KEGG" id="hal:VNG_1766C"/>
<dbReference type="PATRIC" id="fig|64091.14.peg.1345"/>
<dbReference type="HOGENOM" id="CLU_037423_3_0_2"/>
<dbReference type="InParanoid" id="Q9HP80"/>
<dbReference type="OrthoDB" id="85198at2157"/>
<dbReference type="PhylomeDB" id="Q9HP80"/>
<dbReference type="Proteomes" id="UP000000554">
    <property type="component" value="Chromosome"/>
</dbReference>
<dbReference type="GO" id="GO:0005737">
    <property type="term" value="C:cytoplasm"/>
    <property type="evidence" value="ECO:0000318"/>
    <property type="project" value="GO_Central"/>
</dbReference>
<dbReference type="GO" id="GO:0046872">
    <property type="term" value="F:metal ion binding"/>
    <property type="evidence" value="ECO:0007669"/>
    <property type="project" value="UniProtKB-KW"/>
</dbReference>
<dbReference type="FunFam" id="3.40.1390.30:FF:000001">
    <property type="entry name" value="GTP cyclohydrolase 1 type 2"/>
    <property type="match status" value="1"/>
</dbReference>
<dbReference type="Gene3D" id="3.40.1390.30">
    <property type="entry name" value="NIF3 (NGG1p interacting factor 3)-like"/>
    <property type="match status" value="2"/>
</dbReference>
<dbReference type="InterPro" id="IPR002678">
    <property type="entry name" value="DUF34/NIF3"/>
</dbReference>
<dbReference type="InterPro" id="IPR036069">
    <property type="entry name" value="DUF34/NIF3_sf"/>
</dbReference>
<dbReference type="NCBIfam" id="TIGR00486">
    <property type="entry name" value="YbgI_SA1388"/>
    <property type="match status" value="1"/>
</dbReference>
<dbReference type="PANTHER" id="PTHR13799:SF14">
    <property type="entry name" value="GTP CYCLOHYDROLASE 1 TYPE 2 HOMOLOG"/>
    <property type="match status" value="1"/>
</dbReference>
<dbReference type="PANTHER" id="PTHR13799">
    <property type="entry name" value="NGG1 INTERACTING FACTOR 3"/>
    <property type="match status" value="1"/>
</dbReference>
<dbReference type="Pfam" id="PF01784">
    <property type="entry name" value="DUF34_NIF3"/>
    <property type="match status" value="1"/>
</dbReference>
<dbReference type="SUPFAM" id="SSF102705">
    <property type="entry name" value="NIF3 (NGG1p interacting factor 3)-like"/>
    <property type="match status" value="1"/>
</dbReference>
<protein>
    <recommendedName>
        <fullName>GTP cyclohydrolase 1 type 2 homolog</fullName>
    </recommendedName>
</protein>